<protein>
    <recommendedName>
        <fullName>7-deoxyloganetin glucosyltransferase</fullName>
        <ecNumber>2.4.1.324</ecNumber>
    </recommendedName>
    <alternativeName>
        <fullName>Iridoid 1-O-glucosyltransferase</fullName>
    </alternativeName>
    <alternativeName>
        <fullName>UDP-glucose glucosyltransferase 6</fullName>
        <shortName>CrUGT6</shortName>
    </alternativeName>
    <alternativeName>
        <fullName>UDP-glycosyltransferase 85A23</fullName>
    </alternativeName>
</protein>
<evidence type="ECO:0000250" key="1">
    <source>
        <dbReference type="UniProtKB" id="A0A0A1HA03"/>
    </source>
</evidence>
<evidence type="ECO:0000250" key="2">
    <source>
        <dbReference type="UniProtKB" id="P51094"/>
    </source>
</evidence>
<evidence type="ECO:0000269" key="3">
    <source>
    </source>
</evidence>
<evidence type="ECO:0000305" key="4"/>
<gene>
    <name type="primary">UGT85A23</name>
    <name type="synonym">UGT6</name>
</gene>
<feature type="chain" id="PRO_0000430133" description="7-deoxyloganetin glucosyltransferase">
    <location>
        <begin position="1"/>
        <end position="487"/>
    </location>
</feature>
<feature type="active site" description="Proton acceptor" evidence="1">
    <location>
        <position position="25"/>
    </location>
</feature>
<feature type="active site" description="Charge relay" evidence="1">
    <location>
        <position position="129"/>
    </location>
</feature>
<feature type="binding site" evidence="2">
    <location>
        <position position="25"/>
    </location>
    <ligand>
        <name>an anthocyanidin</name>
        <dbReference type="ChEBI" id="CHEBI:143576"/>
    </ligand>
</feature>
<feature type="binding site" evidence="1">
    <location>
        <position position="151"/>
    </location>
    <ligand>
        <name>UDP-alpha-D-glucose</name>
        <dbReference type="ChEBI" id="CHEBI:58885"/>
    </ligand>
</feature>
<feature type="binding site" evidence="1">
    <location>
        <position position="366"/>
    </location>
    <ligand>
        <name>UDP-alpha-D-glucose</name>
        <dbReference type="ChEBI" id="CHEBI:58885"/>
    </ligand>
</feature>
<feature type="binding site" evidence="1">
    <location>
        <position position="381"/>
    </location>
    <ligand>
        <name>UDP-alpha-D-glucose</name>
        <dbReference type="ChEBI" id="CHEBI:58885"/>
    </ligand>
</feature>
<feature type="binding site" evidence="1">
    <location>
        <position position="384"/>
    </location>
    <ligand>
        <name>UDP-alpha-D-glucose</name>
        <dbReference type="ChEBI" id="CHEBI:58885"/>
    </ligand>
</feature>
<feature type="binding site" evidence="1">
    <location>
        <position position="385"/>
    </location>
    <ligand>
        <name>UDP-alpha-D-glucose</name>
        <dbReference type="ChEBI" id="CHEBI:58885"/>
    </ligand>
</feature>
<feature type="binding site" evidence="1">
    <location>
        <position position="386"/>
    </location>
    <ligand>
        <name>UDP-alpha-D-glucose</name>
        <dbReference type="ChEBI" id="CHEBI:58885"/>
    </ligand>
</feature>
<feature type="binding site" evidence="1">
    <location>
        <position position="389"/>
    </location>
    <ligand>
        <name>UDP-alpha-D-glucose</name>
        <dbReference type="ChEBI" id="CHEBI:58885"/>
    </ligand>
</feature>
<feature type="binding site" evidence="2">
    <location>
        <position position="404"/>
    </location>
    <ligand>
        <name>an anthocyanidin</name>
        <dbReference type="ChEBI" id="CHEBI:143576"/>
    </ligand>
</feature>
<feature type="binding site" evidence="1">
    <location>
        <position position="405"/>
    </location>
    <ligand>
        <name>UDP-alpha-D-glucose</name>
        <dbReference type="ChEBI" id="CHEBI:58885"/>
    </ligand>
</feature>
<feature type="binding site" evidence="1">
    <location>
        <position position="406"/>
    </location>
    <ligand>
        <name>UDP-alpha-D-glucose</name>
        <dbReference type="ChEBI" id="CHEBI:58885"/>
    </ligand>
</feature>
<keyword id="KW-0808">Transferase</keyword>
<accession>F8WLS6</accession>
<comment type="function">
    <text evidence="3">Iridoid glucosyltransferase acting exclusively on 7-deoxyloganetin. No activity with 7-deoxyloganetic acid.</text>
</comment>
<comment type="catalytic activity">
    <reaction evidence="3">
        <text>7-deoxyloganetin + UDP-alpha-D-glucose = 7-deoxyloganin + UDP + H(+)</text>
        <dbReference type="Rhea" id="RHEA:39899"/>
        <dbReference type="ChEBI" id="CHEBI:15378"/>
        <dbReference type="ChEBI" id="CHEBI:18370"/>
        <dbReference type="ChEBI" id="CHEBI:58223"/>
        <dbReference type="ChEBI" id="CHEBI:58885"/>
        <dbReference type="ChEBI" id="CHEBI:76849"/>
        <dbReference type="EC" id="2.4.1.324"/>
    </reaction>
</comment>
<comment type="biophysicochemical properties">
    <kinetics>
        <KM evidence="3">0.202 mM for 7-deoxyloganetin</KM>
        <KM evidence="3">0.117 mM for UPD-glucose</KM>
        <text>kcat is 0.0355 sec(-1) for 7-deoxyloganetin. kcat is 0.0320 sec(-1) for UPD-glucose.</text>
    </kinetics>
</comment>
<comment type="tissue specificity">
    <text evidence="3">Expressed in roots.</text>
</comment>
<comment type="similarity">
    <text evidence="4">Belongs to the UDP-glycosyltransferase family.</text>
</comment>
<organism>
    <name type="scientific">Catharanthus roseus</name>
    <name type="common">Madagascar periwinkle</name>
    <name type="synonym">Vinca rosea</name>
    <dbReference type="NCBI Taxonomy" id="4058"/>
    <lineage>
        <taxon>Eukaryota</taxon>
        <taxon>Viridiplantae</taxon>
        <taxon>Streptophyta</taxon>
        <taxon>Embryophyta</taxon>
        <taxon>Tracheophyta</taxon>
        <taxon>Spermatophyta</taxon>
        <taxon>Magnoliopsida</taxon>
        <taxon>eudicotyledons</taxon>
        <taxon>Gunneridae</taxon>
        <taxon>Pentapetalae</taxon>
        <taxon>asterids</taxon>
        <taxon>lamiids</taxon>
        <taxon>Gentianales</taxon>
        <taxon>Apocynaceae</taxon>
        <taxon>Rauvolfioideae</taxon>
        <taxon>Vinceae</taxon>
        <taxon>Catharanthinae</taxon>
        <taxon>Catharanthus</taxon>
    </lineage>
</organism>
<sequence length="487" mass="54611">MGSLSSSDYSKKPHAVCIPYPAQGHINPMLKLAKLLHYKGFHITFVNTEFNHKRLLKSRGSDSLKGLHSFQFKTIPDGLPPSDVDATQDIPSLCESTTTHCLVPFKQLLQKLNDTSSSEVPPVSCVVSDAVMSFTISAAQELDIPEVLFWTPSACGVLGYMHYAQLIDKGLTPLKDASYFSNGFLDQVLDWIPGMEGIRLRDLPTFLRTTNPDEYMIKFILQETERSKKASAIVLNTFQELESEVIDSLSTLLPPIYPIGPLQILQNQVDDESLKVLGSNLWKEEPECLEWLDTKDPNSVVYVNFGSITVMTNDQLIEFAWGLANSKQNFLWIIRPDLISGESSILGEEFVEETKERGLIASWCHQEQVINHPAIGGFLTHNGWNSTIESISSGVPMICWPFFAEQQTNCRFCCNKWGIGMEINSDVKRDEVESLVKELMVGEKGKEMKKKALEWKNIAEVTTTKPDGSSYSNLEKLIKVLKSKPSH</sequence>
<name>UGT6_CATRO</name>
<proteinExistence type="evidence at protein level"/>
<dbReference type="EC" id="2.4.1.324"/>
<dbReference type="EMBL" id="AB591741">
    <property type="protein sequence ID" value="BAK55749.1"/>
    <property type="molecule type" value="mRNA"/>
</dbReference>
<dbReference type="SMR" id="F8WLS6"/>
<dbReference type="CAZy" id="GT1">
    <property type="family name" value="Glycosyltransferase Family 1"/>
</dbReference>
<dbReference type="KEGG" id="ag:BAK55749"/>
<dbReference type="BRENDA" id="2.4.1.324">
    <property type="organism ID" value="1211"/>
</dbReference>
<dbReference type="GO" id="GO:0080043">
    <property type="term" value="F:quercetin 3-O-glucosyltransferase activity"/>
    <property type="evidence" value="ECO:0007669"/>
    <property type="project" value="TreeGrafter"/>
</dbReference>
<dbReference type="GO" id="GO:0080044">
    <property type="term" value="F:quercetin 7-O-glucosyltransferase activity"/>
    <property type="evidence" value="ECO:0007669"/>
    <property type="project" value="TreeGrafter"/>
</dbReference>
<dbReference type="GO" id="GO:0035251">
    <property type="term" value="F:UDP-glucosyltransferase activity"/>
    <property type="evidence" value="ECO:0000314"/>
    <property type="project" value="UniProtKB"/>
</dbReference>
<dbReference type="GO" id="GO:1900994">
    <property type="term" value="P:(-)-secologanin biosynthetic process"/>
    <property type="evidence" value="ECO:0000314"/>
    <property type="project" value="UniProtKB"/>
</dbReference>
<dbReference type="CDD" id="cd03784">
    <property type="entry name" value="GT1_Gtf-like"/>
    <property type="match status" value="1"/>
</dbReference>
<dbReference type="FunFam" id="3.40.50.2000:FF:000027">
    <property type="entry name" value="Glycosyltransferase"/>
    <property type="match status" value="1"/>
</dbReference>
<dbReference type="FunFam" id="3.40.50.2000:FF:000055">
    <property type="entry name" value="Glycosyltransferase"/>
    <property type="match status" value="1"/>
</dbReference>
<dbReference type="Gene3D" id="3.40.50.2000">
    <property type="entry name" value="Glycogen Phosphorylase B"/>
    <property type="match status" value="2"/>
</dbReference>
<dbReference type="InterPro" id="IPR002213">
    <property type="entry name" value="UDP_glucos_trans"/>
</dbReference>
<dbReference type="PANTHER" id="PTHR11926">
    <property type="entry name" value="GLUCOSYL/GLUCURONOSYL TRANSFERASES"/>
    <property type="match status" value="1"/>
</dbReference>
<dbReference type="PANTHER" id="PTHR11926:SF774">
    <property type="entry name" value="UDP-GLYCOSYLTRANSFERASE 85A1-RELATED"/>
    <property type="match status" value="1"/>
</dbReference>
<dbReference type="Pfam" id="PF00201">
    <property type="entry name" value="UDPGT"/>
    <property type="match status" value="1"/>
</dbReference>
<dbReference type="SUPFAM" id="SSF53756">
    <property type="entry name" value="UDP-Glycosyltransferase/glycogen phosphorylase"/>
    <property type="match status" value="1"/>
</dbReference>
<reference key="1">
    <citation type="journal article" date="2011" name="J. Biol. Chem.">
        <title>Iridoid-specific Glucosyltransferase from Gardenia jasminoides.</title>
        <authorList>
            <person name="Nagatoshi M."/>
            <person name="Terasaka K."/>
            <person name="Nagatsu A."/>
            <person name="Mizukami H."/>
        </authorList>
    </citation>
    <scope>NUCLEOTIDE SEQUENCE [MRNA]</scope>
</reference>
<reference key="2">
    <citation type="journal article" date="2013" name="Plant Cell">
        <title>A 7-deoxyloganetic Acid glucosyltransferase contributes a key step in secologanin biosynthesis in madagascar periwinkle.</title>
        <authorList>
            <person name="Asada K."/>
            <person name="Salim V."/>
            <person name="Masada-Atsumi S."/>
            <person name="Edmunds E."/>
            <person name="Nagatoshi M."/>
            <person name="Terasaka K."/>
            <person name="Mizukami H."/>
            <person name="De Luca V."/>
        </authorList>
    </citation>
    <scope>FUNCTION</scope>
    <scope>CATALYTIC ACTIVITY</scope>
    <scope>BIOPHYSICOCHEMICAL PROPERTIES</scope>
    <scope>TISSUE SPECIFICITY</scope>
</reference>